<sequence length="241" mass="25971">MAGHSKWANIKHKKAAADAKRGKIWTRLIKEITVAARLGGGDVDSNPRLRLAIDKGTDANMPKDNIQRAIQRGVGGLEGAHYEEIRYEGYGISGAAIIVDCMTDNRTRTVAEVRHAFDKHGGNMGTQGSVAFMFDHVGQFIFAPGTPEDKLMDAALEAGAEDVVTNDDGSIEVLCPPNDFAKVKAALEGAGFKAELAEVIMKPQTEVEFTGDDAAKMQKLLDALENLDDVQEVYTNAVIGE</sequence>
<proteinExistence type="inferred from homology"/>
<comment type="subcellular location">
    <subcellularLocation>
        <location evidence="1">Cytoplasm</location>
    </subcellularLocation>
</comment>
<comment type="similarity">
    <text evidence="1">Belongs to the TACO1 family.</text>
</comment>
<accession>Q8XXC5</accession>
<keyword id="KW-0963">Cytoplasm</keyword>
<keyword id="KW-0238">DNA-binding</keyword>
<keyword id="KW-1185">Reference proteome</keyword>
<keyword id="KW-0804">Transcription</keyword>
<keyword id="KW-0805">Transcription regulation</keyword>
<name>Y2190_RALN1</name>
<protein>
    <recommendedName>
        <fullName evidence="1">Probable transcriptional regulatory protein RSc2190</fullName>
    </recommendedName>
</protein>
<gene>
    <name type="ordered locus">RSc2190</name>
    <name type="ORF">RS01409</name>
</gene>
<dbReference type="EMBL" id="AL646052">
    <property type="protein sequence ID" value="CAD15897.1"/>
    <property type="molecule type" value="Genomic_DNA"/>
</dbReference>
<dbReference type="RefSeq" id="WP_011002118.1">
    <property type="nucleotide sequence ID" value="NC_003295.1"/>
</dbReference>
<dbReference type="SMR" id="Q8XXC5"/>
<dbReference type="STRING" id="267608.RSc2190"/>
<dbReference type="EnsemblBacteria" id="CAD15897">
    <property type="protein sequence ID" value="CAD15897"/>
    <property type="gene ID" value="RSc2190"/>
</dbReference>
<dbReference type="KEGG" id="rso:RSc2190"/>
<dbReference type="eggNOG" id="COG0217">
    <property type="taxonomic scope" value="Bacteria"/>
</dbReference>
<dbReference type="HOGENOM" id="CLU_062974_2_2_4"/>
<dbReference type="Proteomes" id="UP000001436">
    <property type="component" value="Chromosome"/>
</dbReference>
<dbReference type="GO" id="GO:0005829">
    <property type="term" value="C:cytosol"/>
    <property type="evidence" value="ECO:0007669"/>
    <property type="project" value="TreeGrafter"/>
</dbReference>
<dbReference type="GO" id="GO:0003677">
    <property type="term" value="F:DNA binding"/>
    <property type="evidence" value="ECO:0007669"/>
    <property type="project" value="UniProtKB-UniRule"/>
</dbReference>
<dbReference type="GO" id="GO:0006355">
    <property type="term" value="P:regulation of DNA-templated transcription"/>
    <property type="evidence" value="ECO:0007669"/>
    <property type="project" value="UniProtKB-UniRule"/>
</dbReference>
<dbReference type="FunFam" id="1.10.10.200:FF:000001">
    <property type="entry name" value="Probable transcriptional regulatory protein YebC"/>
    <property type="match status" value="1"/>
</dbReference>
<dbReference type="FunFam" id="3.30.70.980:FF:000002">
    <property type="entry name" value="Probable transcriptional regulatory protein YebC"/>
    <property type="match status" value="1"/>
</dbReference>
<dbReference type="Gene3D" id="1.10.10.200">
    <property type="match status" value="1"/>
</dbReference>
<dbReference type="Gene3D" id="3.30.70.980">
    <property type="match status" value="2"/>
</dbReference>
<dbReference type="HAMAP" id="MF_00693">
    <property type="entry name" value="Transcrip_reg_TACO1"/>
    <property type="match status" value="1"/>
</dbReference>
<dbReference type="InterPro" id="IPR017856">
    <property type="entry name" value="Integrase-like_N"/>
</dbReference>
<dbReference type="InterPro" id="IPR048300">
    <property type="entry name" value="TACO1_YebC-like_2nd/3rd_dom"/>
</dbReference>
<dbReference type="InterPro" id="IPR049083">
    <property type="entry name" value="TACO1_YebC_N"/>
</dbReference>
<dbReference type="InterPro" id="IPR002876">
    <property type="entry name" value="Transcrip_reg_TACO1-like"/>
</dbReference>
<dbReference type="InterPro" id="IPR026564">
    <property type="entry name" value="Transcrip_reg_TACO1-like_dom3"/>
</dbReference>
<dbReference type="InterPro" id="IPR029072">
    <property type="entry name" value="YebC-like"/>
</dbReference>
<dbReference type="NCBIfam" id="NF001030">
    <property type="entry name" value="PRK00110.1"/>
    <property type="match status" value="1"/>
</dbReference>
<dbReference type="NCBIfam" id="NF009044">
    <property type="entry name" value="PRK12378.1"/>
    <property type="match status" value="1"/>
</dbReference>
<dbReference type="NCBIfam" id="TIGR01033">
    <property type="entry name" value="YebC/PmpR family DNA-binding transcriptional regulator"/>
    <property type="match status" value="1"/>
</dbReference>
<dbReference type="PANTHER" id="PTHR12532:SF6">
    <property type="entry name" value="TRANSCRIPTIONAL REGULATORY PROTEIN YEBC-RELATED"/>
    <property type="match status" value="1"/>
</dbReference>
<dbReference type="PANTHER" id="PTHR12532">
    <property type="entry name" value="TRANSLATIONAL ACTIVATOR OF CYTOCHROME C OXIDASE 1"/>
    <property type="match status" value="1"/>
</dbReference>
<dbReference type="Pfam" id="PF20772">
    <property type="entry name" value="TACO1_YebC_N"/>
    <property type="match status" value="1"/>
</dbReference>
<dbReference type="Pfam" id="PF01709">
    <property type="entry name" value="Transcrip_reg"/>
    <property type="match status" value="1"/>
</dbReference>
<dbReference type="SUPFAM" id="SSF75625">
    <property type="entry name" value="YebC-like"/>
    <property type="match status" value="1"/>
</dbReference>
<reference key="1">
    <citation type="journal article" date="2002" name="Nature">
        <title>Genome sequence of the plant pathogen Ralstonia solanacearum.</title>
        <authorList>
            <person name="Salanoubat M."/>
            <person name="Genin S."/>
            <person name="Artiguenave F."/>
            <person name="Gouzy J."/>
            <person name="Mangenot S."/>
            <person name="Arlat M."/>
            <person name="Billault A."/>
            <person name="Brottier P."/>
            <person name="Camus J.-C."/>
            <person name="Cattolico L."/>
            <person name="Chandler M."/>
            <person name="Choisne N."/>
            <person name="Claudel-Renard C."/>
            <person name="Cunnac S."/>
            <person name="Demange N."/>
            <person name="Gaspin C."/>
            <person name="Lavie M."/>
            <person name="Moisan A."/>
            <person name="Robert C."/>
            <person name="Saurin W."/>
            <person name="Schiex T."/>
            <person name="Siguier P."/>
            <person name="Thebault P."/>
            <person name="Whalen M."/>
            <person name="Wincker P."/>
            <person name="Levy M."/>
            <person name="Weissenbach J."/>
            <person name="Boucher C.A."/>
        </authorList>
    </citation>
    <scope>NUCLEOTIDE SEQUENCE [LARGE SCALE GENOMIC DNA]</scope>
    <source>
        <strain>ATCC BAA-1114 / GMI1000</strain>
    </source>
</reference>
<feature type="chain" id="PRO_0000175873" description="Probable transcriptional regulatory protein RSc2190">
    <location>
        <begin position="1"/>
        <end position="241"/>
    </location>
</feature>
<evidence type="ECO:0000255" key="1">
    <source>
        <dbReference type="HAMAP-Rule" id="MF_00693"/>
    </source>
</evidence>
<organism>
    <name type="scientific">Ralstonia nicotianae (strain ATCC BAA-1114 / GMI1000)</name>
    <name type="common">Ralstonia solanacearum</name>
    <dbReference type="NCBI Taxonomy" id="267608"/>
    <lineage>
        <taxon>Bacteria</taxon>
        <taxon>Pseudomonadati</taxon>
        <taxon>Pseudomonadota</taxon>
        <taxon>Betaproteobacteria</taxon>
        <taxon>Burkholderiales</taxon>
        <taxon>Burkholderiaceae</taxon>
        <taxon>Ralstonia</taxon>
        <taxon>Ralstonia solanacearum species complex</taxon>
    </lineage>
</organism>